<reference key="1">
    <citation type="submission" date="2007-02" db="EMBL/GenBank/DDBJ databases">
        <title>Complete sequence of Mycobacterium sp. JLS.</title>
        <authorList>
            <consortium name="US DOE Joint Genome Institute"/>
            <person name="Copeland A."/>
            <person name="Lucas S."/>
            <person name="Lapidus A."/>
            <person name="Barry K."/>
            <person name="Detter J.C."/>
            <person name="Glavina del Rio T."/>
            <person name="Hammon N."/>
            <person name="Israni S."/>
            <person name="Dalin E."/>
            <person name="Tice H."/>
            <person name="Pitluck S."/>
            <person name="Chain P."/>
            <person name="Malfatti S."/>
            <person name="Shin M."/>
            <person name="Vergez L."/>
            <person name="Schmutz J."/>
            <person name="Larimer F."/>
            <person name="Land M."/>
            <person name="Hauser L."/>
            <person name="Kyrpides N."/>
            <person name="Mikhailova N."/>
            <person name="Miller C.D."/>
            <person name="Anderson A.J."/>
            <person name="Sims R.C."/>
            <person name="Richardson P."/>
        </authorList>
    </citation>
    <scope>NUCLEOTIDE SEQUENCE [LARGE SCALE GENOMIC DNA]</scope>
    <source>
        <strain>JLS</strain>
    </source>
</reference>
<accession>A3PYW4</accession>
<gene>
    <name evidence="1" type="primary">ruvA</name>
    <name type="ordered locus">Mjls_2305</name>
</gene>
<evidence type="ECO:0000255" key="1">
    <source>
        <dbReference type="HAMAP-Rule" id="MF_00031"/>
    </source>
</evidence>
<keyword id="KW-0963">Cytoplasm</keyword>
<keyword id="KW-0227">DNA damage</keyword>
<keyword id="KW-0233">DNA recombination</keyword>
<keyword id="KW-0234">DNA repair</keyword>
<keyword id="KW-0238">DNA-binding</keyword>
<proteinExistence type="inferred from homology"/>
<protein>
    <recommendedName>
        <fullName evidence="1">Holliday junction branch migration complex subunit RuvA</fullName>
    </recommendedName>
</protein>
<dbReference type="EMBL" id="CP000580">
    <property type="protein sequence ID" value="ABN98091.1"/>
    <property type="molecule type" value="Genomic_DNA"/>
</dbReference>
<dbReference type="SMR" id="A3PYW4"/>
<dbReference type="KEGG" id="mjl:Mjls_2305"/>
<dbReference type="HOGENOM" id="CLU_087936_2_1_11"/>
<dbReference type="BioCyc" id="MSP164757:G1G8C-2324-MONOMER"/>
<dbReference type="GO" id="GO:0005737">
    <property type="term" value="C:cytoplasm"/>
    <property type="evidence" value="ECO:0007669"/>
    <property type="project" value="UniProtKB-SubCell"/>
</dbReference>
<dbReference type="GO" id="GO:0009379">
    <property type="term" value="C:Holliday junction helicase complex"/>
    <property type="evidence" value="ECO:0007669"/>
    <property type="project" value="InterPro"/>
</dbReference>
<dbReference type="GO" id="GO:0048476">
    <property type="term" value="C:Holliday junction resolvase complex"/>
    <property type="evidence" value="ECO:0007669"/>
    <property type="project" value="UniProtKB-UniRule"/>
</dbReference>
<dbReference type="GO" id="GO:0005524">
    <property type="term" value="F:ATP binding"/>
    <property type="evidence" value="ECO:0007669"/>
    <property type="project" value="InterPro"/>
</dbReference>
<dbReference type="GO" id="GO:0000400">
    <property type="term" value="F:four-way junction DNA binding"/>
    <property type="evidence" value="ECO:0007669"/>
    <property type="project" value="UniProtKB-UniRule"/>
</dbReference>
<dbReference type="GO" id="GO:0009378">
    <property type="term" value="F:four-way junction helicase activity"/>
    <property type="evidence" value="ECO:0007669"/>
    <property type="project" value="InterPro"/>
</dbReference>
<dbReference type="GO" id="GO:0006310">
    <property type="term" value="P:DNA recombination"/>
    <property type="evidence" value="ECO:0007669"/>
    <property type="project" value="UniProtKB-UniRule"/>
</dbReference>
<dbReference type="GO" id="GO:0006281">
    <property type="term" value="P:DNA repair"/>
    <property type="evidence" value="ECO:0007669"/>
    <property type="project" value="UniProtKB-UniRule"/>
</dbReference>
<dbReference type="CDD" id="cd14332">
    <property type="entry name" value="UBA_RuvA_C"/>
    <property type="match status" value="1"/>
</dbReference>
<dbReference type="FunFam" id="2.40.50.140:FF:000083">
    <property type="entry name" value="Holliday junction ATP-dependent DNA helicase RuvA"/>
    <property type="match status" value="1"/>
</dbReference>
<dbReference type="Gene3D" id="1.10.150.20">
    <property type="entry name" value="5' to 3' exonuclease, C-terminal subdomain"/>
    <property type="match status" value="1"/>
</dbReference>
<dbReference type="Gene3D" id="1.10.8.10">
    <property type="entry name" value="DNA helicase RuvA subunit, C-terminal domain"/>
    <property type="match status" value="1"/>
</dbReference>
<dbReference type="Gene3D" id="2.40.50.140">
    <property type="entry name" value="Nucleic acid-binding proteins"/>
    <property type="match status" value="1"/>
</dbReference>
<dbReference type="HAMAP" id="MF_00031">
    <property type="entry name" value="DNA_HJ_migration_RuvA"/>
    <property type="match status" value="1"/>
</dbReference>
<dbReference type="InterPro" id="IPR013849">
    <property type="entry name" value="DNA_helicase_Holl-junc_RuvA_I"/>
</dbReference>
<dbReference type="InterPro" id="IPR003583">
    <property type="entry name" value="Hlx-hairpin-Hlx_DNA-bd_motif"/>
</dbReference>
<dbReference type="InterPro" id="IPR012340">
    <property type="entry name" value="NA-bd_OB-fold"/>
</dbReference>
<dbReference type="InterPro" id="IPR000085">
    <property type="entry name" value="RuvA"/>
</dbReference>
<dbReference type="InterPro" id="IPR010994">
    <property type="entry name" value="RuvA_2-like"/>
</dbReference>
<dbReference type="InterPro" id="IPR011114">
    <property type="entry name" value="RuvA_C"/>
</dbReference>
<dbReference type="InterPro" id="IPR036267">
    <property type="entry name" value="RuvA_C_sf"/>
</dbReference>
<dbReference type="NCBIfam" id="TIGR00084">
    <property type="entry name" value="ruvA"/>
    <property type="match status" value="1"/>
</dbReference>
<dbReference type="Pfam" id="PF14520">
    <property type="entry name" value="HHH_5"/>
    <property type="match status" value="1"/>
</dbReference>
<dbReference type="Pfam" id="PF07499">
    <property type="entry name" value="RuvA_C"/>
    <property type="match status" value="1"/>
</dbReference>
<dbReference type="Pfam" id="PF01330">
    <property type="entry name" value="RuvA_N"/>
    <property type="match status" value="1"/>
</dbReference>
<dbReference type="SMART" id="SM00278">
    <property type="entry name" value="HhH1"/>
    <property type="match status" value="2"/>
</dbReference>
<dbReference type="SUPFAM" id="SSF46929">
    <property type="entry name" value="DNA helicase RuvA subunit, C-terminal domain"/>
    <property type="match status" value="1"/>
</dbReference>
<dbReference type="SUPFAM" id="SSF50249">
    <property type="entry name" value="Nucleic acid-binding proteins"/>
    <property type="match status" value="1"/>
</dbReference>
<dbReference type="SUPFAM" id="SSF47781">
    <property type="entry name" value="RuvA domain 2-like"/>
    <property type="match status" value="1"/>
</dbReference>
<sequence length="196" mass="20042">MIASVRGEVIDIALDHAVIEAAGVGYKVMATPSTLATLRRGTESRLVTAMIVREDSMTLYGFADADARDLFGTLLGVSGVGPKIALATLAVYDAPTLRQALADGDVTALTRVPGIGKRGAERMVLELRDKIGPVTTGAGVTAVGGHAVRGPVVEALVGLGFAAKQAEEACDKVLAADPDATTSSALRAALSMLGKK</sequence>
<feature type="chain" id="PRO_1000002490" description="Holliday junction branch migration complex subunit RuvA">
    <location>
        <begin position="1"/>
        <end position="196"/>
    </location>
</feature>
<feature type="region of interest" description="Domain I" evidence="1">
    <location>
        <begin position="1"/>
        <end position="63"/>
    </location>
</feature>
<feature type="region of interest" description="Domain II" evidence="1">
    <location>
        <begin position="64"/>
        <end position="142"/>
    </location>
</feature>
<feature type="region of interest" description="Flexible linker" evidence="1">
    <location>
        <begin position="143"/>
        <end position="151"/>
    </location>
</feature>
<feature type="region of interest" description="Domain III" evidence="1">
    <location>
        <begin position="151"/>
        <end position="196"/>
    </location>
</feature>
<name>RUVA_MYCSJ</name>
<comment type="function">
    <text evidence="1">The RuvA-RuvB-RuvC complex processes Holliday junction (HJ) DNA during genetic recombination and DNA repair, while the RuvA-RuvB complex plays an important role in the rescue of blocked DNA replication forks via replication fork reversal (RFR). RuvA specifically binds to HJ cruciform DNA, conferring on it an open structure. The RuvB hexamer acts as an ATP-dependent pump, pulling dsDNA into and through the RuvAB complex. HJ branch migration allows RuvC to scan DNA until it finds its consensus sequence, where it cleaves and resolves the cruciform DNA.</text>
</comment>
<comment type="subunit">
    <text evidence="1">Homotetramer. Forms an RuvA(8)-RuvB(12)-Holliday junction (HJ) complex. HJ DNA is sandwiched between 2 RuvA tetramers; dsDNA enters through RuvA and exits via RuvB. An RuvB hexamer assembles on each DNA strand where it exits the tetramer. Each RuvB hexamer is contacted by two RuvA subunits (via domain III) on 2 adjacent RuvB subunits; this complex drives branch migration. In the full resolvosome a probable DNA-RuvA(4)-RuvB(12)-RuvC(2) complex forms which resolves the HJ.</text>
</comment>
<comment type="subcellular location">
    <subcellularLocation>
        <location evidence="1">Cytoplasm</location>
    </subcellularLocation>
</comment>
<comment type="domain">
    <text evidence="1">Has three domains with a flexible linker between the domains II and III and assumes an 'L' shape. Domain III is highly mobile and contacts RuvB.</text>
</comment>
<comment type="similarity">
    <text evidence="1">Belongs to the RuvA family.</text>
</comment>
<organism>
    <name type="scientific">Mycobacterium sp. (strain JLS)</name>
    <dbReference type="NCBI Taxonomy" id="164757"/>
    <lineage>
        <taxon>Bacteria</taxon>
        <taxon>Bacillati</taxon>
        <taxon>Actinomycetota</taxon>
        <taxon>Actinomycetes</taxon>
        <taxon>Mycobacteriales</taxon>
        <taxon>Mycobacteriaceae</taxon>
        <taxon>Mycobacterium</taxon>
    </lineage>
</organism>